<evidence type="ECO:0000250" key="1"/>
<evidence type="ECO:0000255" key="2"/>
<evidence type="ECO:0000256" key="3">
    <source>
        <dbReference type="SAM" id="MobiDB-lite"/>
    </source>
</evidence>
<evidence type="ECO:0000269" key="4">
    <source>
    </source>
</evidence>
<evidence type="ECO:0000305" key="5"/>
<comment type="function">
    <text>Transcriptional regulator that specifically binds DNA sequence 5'-AGAAnnTTCT-3' known as heat shock promoter elements (HSE).</text>
</comment>
<comment type="subunit">
    <text evidence="1">Homotrimer.</text>
</comment>
<comment type="subcellular location">
    <subcellularLocation>
        <location evidence="5">Nucleus</location>
    </subcellularLocation>
</comment>
<comment type="induction">
    <text evidence="4">By heat stress.</text>
</comment>
<comment type="domain">
    <text>The hydrophobic-rich region (HR-A/B) corresponds to the oligomerization domain.</text>
</comment>
<comment type="PTM">
    <text evidence="1">Exhibits temperature-dependent phosphorylation.</text>
</comment>
<comment type="similarity">
    <text evidence="5">Belongs to the HSF family. Class B subfamily.</text>
</comment>
<reference key="1">
    <citation type="journal article" date="1996" name="Cell Stress Chaperones">
        <title>The Hsf world: classification and properties of plant heat stress transcription factors.</title>
        <authorList>
            <person name="Nover L."/>
            <person name="Scharf K.-D."/>
            <person name="Gagliardi D."/>
            <person name="Vergne P."/>
            <person name="Czarnecka-Verner E."/>
            <person name="Gurley W.B."/>
        </authorList>
    </citation>
    <scope>NUCLEOTIDE SEQUENCE [MRNA]</scope>
    <source>
        <strain>cv. Columbia</strain>
        <tissue>Leaf</tissue>
        <tissue>Stem</tissue>
    </source>
</reference>
<reference key="2">
    <citation type="journal article" date="1998" name="Mol. Gen. Genet.">
        <title>HSF3, a new heat shock factor from Arabidopsis thaliana, derepresses the heat shock response and confers thermotolerance when overexpressed in transgenic plants.</title>
        <authorList>
            <person name="Praendl R."/>
            <person name="Hinderhofer K."/>
            <person name="Eggers-Schumacher G."/>
            <person name="Schoeffl F."/>
        </authorList>
    </citation>
    <scope>NUCLEOTIDE SEQUENCE [MRNA]</scope>
    <scope>INDUCTION</scope>
    <source>
        <strain>cv. Columbia</strain>
        <tissue>Green siliques</tissue>
    </source>
</reference>
<reference key="3">
    <citation type="journal article" date="1998" name="Nature">
        <title>Analysis of 1.9 Mb of contiguous sequence from chromosome 4 of Arabidopsis thaliana.</title>
        <authorList>
            <person name="Bevan M."/>
            <person name="Bancroft I."/>
            <person name="Bent E."/>
            <person name="Love K."/>
            <person name="Goodman H.M."/>
            <person name="Dean C."/>
            <person name="Bergkamp R."/>
            <person name="Dirkse W."/>
            <person name="van Staveren M."/>
            <person name="Stiekema W."/>
            <person name="Drost L."/>
            <person name="Ridley P."/>
            <person name="Hudson S.-A."/>
            <person name="Patel K."/>
            <person name="Murphy G."/>
            <person name="Piffanelli P."/>
            <person name="Wedler H."/>
            <person name="Wedler E."/>
            <person name="Wambutt R."/>
            <person name="Weitzenegger T."/>
            <person name="Pohl T."/>
            <person name="Terryn N."/>
            <person name="Gielen J."/>
            <person name="Villarroel R."/>
            <person name="De Clercq R."/>
            <person name="van Montagu M."/>
            <person name="Lecharny A."/>
            <person name="Aubourg S."/>
            <person name="Gy I."/>
            <person name="Kreis M."/>
            <person name="Lao N."/>
            <person name="Kavanagh T."/>
            <person name="Hempel S."/>
            <person name="Kotter P."/>
            <person name="Entian K.-D."/>
            <person name="Rieger M."/>
            <person name="Schaefer M."/>
            <person name="Funk B."/>
            <person name="Mueller-Auer S."/>
            <person name="Silvey M."/>
            <person name="James R."/>
            <person name="Monfort A."/>
            <person name="Pons A."/>
            <person name="Puigdomenech P."/>
            <person name="Douka A."/>
            <person name="Voukelatou E."/>
            <person name="Milioni D."/>
            <person name="Hatzopoulos P."/>
            <person name="Piravandi E."/>
            <person name="Obermaier B."/>
            <person name="Hilbert H."/>
            <person name="Duesterhoeft A."/>
            <person name="Moores T."/>
            <person name="Jones J.D.G."/>
            <person name="Eneva T."/>
            <person name="Palme K."/>
            <person name="Benes V."/>
            <person name="Rechmann S."/>
            <person name="Ansorge W."/>
            <person name="Cooke R."/>
            <person name="Berger C."/>
            <person name="Delseny M."/>
            <person name="Voet M."/>
            <person name="Volckaert G."/>
            <person name="Mewes H.-W."/>
            <person name="Klosterman S."/>
            <person name="Schueller C."/>
            <person name="Chalwatzis N."/>
        </authorList>
    </citation>
    <scope>NUCLEOTIDE SEQUENCE [LARGE SCALE GENOMIC DNA]</scope>
    <source>
        <strain>cv. Columbia</strain>
    </source>
</reference>
<reference key="4">
    <citation type="journal article" date="1999" name="Nature">
        <title>Sequence and analysis of chromosome 4 of the plant Arabidopsis thaliana.</title>
        <authorList>
            <person name="Mayer K.F.X."/>
            <person name="Schueller C."/>
            <person name="Wambutt R."/>
            <person name="Murphy G."/>
            <person name="Volckaert G."/>
            <person name="Pohl T."/>
            <person name="Duesterhoeft A."/>
            <person name="Stiekema W."/>
            <person name="Entian K.-D."/>
            <person name="Terryn N."/>
            <person name="Harris B."/>
            <person name="Ansorge W."/>
            <person name="Brandt P."/>
            <person name="Grivell L.A."/>
            <person name="Rieger M."/>
            <person name="Weichselgartner M."/>
            <person name="de Simone V."/>
            <person name="Obermaier B."/>
            <person name="Mache R."/>
            <person name="Mueller M."/>
            <person name="Kreis M."/>
            <person name="Delseny M."/>
            <person name="Puigdomenech P."/>
            <person name="Watson M."/>
            <person name="Schmidtheini T."/>
            <person name="Reichert B."/>
            <person name="Portetelle D."/>
            <person name="Perez-Alonso M."/>
            <person name="Boutry M."/>
            <person name="Bancroft I."/>
            <person name="Vos P."/>
            <person name="Hoheisel J."/>
            <person name="Zimmermann W."/>
            <person name="Wedler H."/>
            <person name="Ridley P."/>
            <person name="Langham S.-A."/>
            <person name="McCullagh B."/>
            <person name="Bilham L."/>
            <person name="Robben J."/>
            <person name="van der Schueren J."/>
            <person name="Grymonprez B."/>
            <person name="Chuang Y.-J."/>
            <person name="Vandenbussche F."/>
            <person name="Braeken M."/>
            <person name="Weltjens I."/>
            <person name="Voet M."/>
            <person name="Bastiaens I."/>
            <person name="Aert R."/>
            <person name="Defoor E."/>
            <person name="Weitzenegger T."/>
            <person name="Bothe G."/>
            <person name="Ramsperger U."/>
            <person name="Hilbert H."/>
            <person name="Braun M."/>
            <person name="Holzer E."/>
            <person name="Brandt A."/>
            <person name="Peters S."/>
            <person name="van Staveren M."/>
            <person name="Dirkse W."/>
            <person name="Mooijman P."/>
            <person name="Klein Lankhorst R."/>
            <person name="Rose M."/>
            <person name="Hauf J."/>
            <person name="Koetter P."/>
            <person name="Berneiser S."/>
            <person name="Hempel S."/>
            <person name="Feldpausch M."/>
            <person name="Lamberth S."/>
            <person name="Van den Daele H."/>
            <person name="De Keyser A."/>
            <person name="Buysshaert C."/>
            <person name="Gielen J."/>
            <person name="Villarroel R."/>
            <person name="De Clercq R."/>
            <person name="van Montagu M."/>
            <person name="Rogers J."/>
            <person name="Cronin A."/>
            <person name="Quail M.A."/>
            <person name="Bray-Allen S."/>
            <person name="Clark L."/>
            <person name="Doggett J."/>
            <person name="Hall S."/>
            <person name="Kay M."/>
            <person name="Lennard N."/>
            <person name="McLay K."/>
            <person name="Mayes R."/>
            <person name="Pettett A."/>
            <person name="Rajandream M.A."/>
            <person name="Lyne M."/>
            <person name="Benes V."/>
            <person name="Rechmann S."/>
            <person name="Borkova D."/>
            <person name="Bloecker H."/>
            <person name="Scharfe M."/>
            <person name="Grimm M."/>
            <person name="Loehnert T.-H."/>
            <person name="Dose S."/>
            <person name="de Haan M."/>
            <person name="Maarse A.C."/>
            <person name="Schaefer M."/>
            <person name="Mueller-Auer S."/>
            <person name="Gabel C."/>
            <person name="Fuchs M."/>
            <person name="Fartmann B."/>
            <person name="Granderath K."/>
            <person name="Dauner D."/>
            <person name="Herzl A."/>
            <person name="Neumann S."/>
            <person name="Argiriou A."/>
            <person name="Vitale D."/>
            <person name="Liguori R."/>
            <person name="Piravandi E."/>
            <person name="Massenet O."/>
            <person name="Quigley F."/>
            <person name="Clabauld G."/>
            <person name="Muendlein A."/>
            <person name="Felber R."/>
            <person name="Schnabl S."/>
            <person name="Hiller R."/>
            <person name="Schmidt W."/>
            <person name="Lecharny A."/>
            <person name="Aubourg S."/>
            <person name="Chefdor F."/>
            <person name="Cooke R."/>
            <person name="Berger C."/>
            <person name="Monfort A."/>
            <person name="Casacuberta E."/>
            <person name="Gibbons T."/>
            <person name="Weber N."/>
            <person name="Vandenbol M."/>
            <person name="Bargues M."/>
            <person name="Terol J."/>
            <person name="Torres A."/>
            <person name="Perez-Perez A."/>
            <person name="Purnelle B."/>
            <person name="Bent E."/>
            <person name="Johnson S."/>
            <person name="Tacon D."/>
            <person name="Jesse T."/>
            <person name="Heijnen L."/>
            <person name="Schwarz S."/>
            <person name="Scholler P."/>
            <person name="Heber S."/>
            <person name="Francs P."/>
            <person name="Bielke C."/>
            <person name="Frishman D."/>
            <person name="Haase D."/>
            <person name="Lemcke K."/>
            <person name="Mewes H.-W."/>
            <person name="Stocker S."/>
            <person name="Zaccaria P."/>
            <person name="Bevan M."/>
            <person name="Wilson R.K."/>
            <person name="de la Bastide M."/>
            <person name="Habermann K."/>
            <person name="Parnell L."/>
            <person name="Dedhia N."/>
            <person name="Gnoj L."/>
            <person name="Schutz K."/>
            <person name="Huang E."/>
            <person name="Spiegel L."/>
            <person name="Sekhon M."/>
            <person name="Murray J."/>
            <person name="Sheet P."/>
            <person name="Cordes M."/>
            <person name="Abu-Threideh J."/>
            <person name="Stoneking T."/>
            <person name="Kalicki J."/>
            <person name="Graves T."/>
            <person name="Harmon G."/>
            <person name="Edwards J."/>
            <person name="Latreille P."/>
            <person name="Courtney L."/>
            <person name="Cloud J."/>
            <person name="Abbott A."/>
            <person name="Scott K."/>
            <person name="Johnson D."/>
            <person name="Minx P."/>
            <person name="Bentley D."/>
            <person name="Fulton B."/>
            <person name="Miller N."/>
            <person name="Greco T."/>
            <person name="Kemp K."/>
            <person name="Kramer J."/>
            <person name="Fulton L."/>
            <person name="Mardis E."/>
            <person name="Dante M."/>
            <person name="Pepin K."/>
            <person name="Hillier L.W."/>
            <person name="Nelson J."/>
            <person name="Spieth J."/>
            <person name="Ryan E."/>
            <person name="Andrews S."/>
            <person name="Geisel C."/>
            <person name="Layman D."/>
            <person name="Du H."/>
            <person name="Ali J."/>
            <person name="Berghoff A."/>
            <person name="Jones K."/>
            <person name="Drone K."/>
            <person name="Cotton M."/>
            <person name="Joshu C."/>
            <person name="Antonoiu B."/>
            <person name="Zidanic M."/>
            <person name="Strong C."/>
            <person name="Sun H."/>
            <person name="Lamar B."/>
            <person name="Yordan C."/>
            <person name="Ma P."/>
            <person name="Zhong J."/>
            <person name="Preston R."/>
            <person name="Vil D."/>
            <person name="Shekher M."/>
            <person name="Matero A."/>
            <person name="Shah R."/>
            <person name="Swaby I.K."/>
            <person name="O'Shaughnessy A."/>
            <person name="Rodriguez M."/>
            <person name="Hoffman J."/>
            <person name="Till S."/>
            <person name="Granat S."/>
            <person name="Shohdy N."/>
            <person name="Hasegawa A."/>
            <person name="Hameed A."/>
            <person name="Lodhi M."/>
            <person name="Johnson A."/>
            <person name="Chen E."/>
            <person name="Marra M.A."/>
            <person name="Martienssen R."/>
            <person name="McCombie W.R."/>
        </authorList>
    </citation>
    <scope>NUCLEOTIDE SEQUENCE [LARGE SCALE GENOMIC DNA]</scope>
    <source>
        <strain>cv. Columbia</strain>
    </source>
</reference>
<reference key="5">
    <citation type="journal article" date="2017" name="Plant J.">
        <title>Araport11: a complete reannotation of the Arabidopsis thaliana reference genome.</title>
        <authorList>
            <person name="Cheng C.Y."/>
            <person name="Krishnakumar V."/>
            <person name="Chan A.P."/>
            <person name="Thibaud-Nissen F."/>
            <person name="Schobel S."/>
            <person name="Town C.D."/>
        </authorList>
    </citation>
    <scope>GENOME REANNOTATION</scope>
    <source>
        <strain>cv. Columbia</strain>
    </source>
</reference>
<reference key="6">
    <citation type="journal article" date="2003" name="Science">
        <title>Empirical analysis of transcriptional activity in the Arabidopsis genome.</title>
        <authorList>
            <person name="Yamada K."/>
            <person name="Lim J."/>
            <person name="Dale J.M."/>
            <person name="Chen H."/>
            <person name="Shinn P."/>
            <person name="Palm C.J."/>
            <person name="Southwick A.M."/>
            <person name="Wu H.C."/>
            <person name="Kim C.J."/>
            <person name="Nguyen M."/>
            <person name="Pham P.K."/>
            <person name="Cheuk R.F."/>
            <person name="Karlin-Newmann G."/>
            <person name="Liu S.X."/>
            <person name="Lam B."/>
            <person name="Sakano H."/>
            <person name="Wu T."/>
            <person name="Yu G."/>
            <person name="Miranda M."/>
            <person name="Quach H.L."/>
            <person name="Tripp M."/>
            <person name="Chang C.H."/>
            <person name="Lee J.M."/>
            <person name="Toriumi M.J."/>
            <person name="Chan M.M."/>
            <person name="Tang C.C."/>
            <person name="Onodera C.S."/>
            <person name="Deng J.M."/>
            <person name="Akiyama K."/>
            <person name="Ansari Y."/>
            <person name="Arakawa T."/>
            <person name="Banh J."/>
            <person name="Banno F."/>
            <person name="Bowser L."/>
            <person name="Brooks S.Y."/>
            <person name="Carninci P."/>
            <person name="Chao Q."/>
            <person name="Choy N."/>
            <person name="Enju A."/>
            <person name="Goldsmith A.D."/>
            <person name="Gurjal M."/>
            <person name="Hansen N.F."/>
            <person name="Hayashizaki Y."/>
            <person name="Johnson-Hopson C."/>
            <person name="Hsuan V.W."/>
            <person name="Iida K."/>
            <person name="Karnes M."/>
            <person name="Khan S."/>
            <person name="Koesema E."/>
            <person name="Ishida J."/>
            <person name="Jiang P.X."/>
            <person name="Jones T."/>
            <person name="Kawai J."/>
            <person name="Kamiya A."/>
            <person name="Meyers C."/>
            <person name="Nakajima M."/>
            <person name="Narusaka M."/>
            <person name="Seki M."/>
            <person name="Sakurai T."/>
            <person name="Satou M."/>
            <person name="Tamse R."/>
            <person name="Vaysberg M."/>
            <person name="Wallender E.K."/>
            <person name="Wong C."/>
            <person name="Yamamura Y."/>
            <person name="Yuan S."/>
            <person name="Shinozaki K."/>
            <person name="Davis R.W."/>
            <person name="Theologis A."/>
            <person name="Ecker J.R."/>
        </authorList>
    </citation>
    <scope>NUCLEOTIDE SEQUENCE [LARGE SCALE MRNA]</scope>
    <source>
        <strain>cv. Columbia</strain>
    </source>
</reference>
<reference key="7">
    <citation type="journal article" date="2001" name="Cell Stress Chaperones">
        <title>Arabidopsis and the heat stress transcription factor world: how many heat stress transcription factors do we need?</title>
        <authorList>
            <person name="Nover L."/>
            <person name="Bharti K."/>
            <person name="Doering P."/>
            <person name="Mishra S.K."/>
            <person name="Ganguli A."/>
            <person name="Scharf K.-D."/>
        </authorList>
    </citation>
    <scope>GENE FAMILY</scope>
    <scope>NOMENCLATURE</scope>
</reference>
<reference key="8">
    <citation type="journal article" date="2008" name="J. Genet. Genomics">
        <title>Genome-wide analysis of heat shock transcription factor families in rice and Arabidopsis.</title>
        <authorList>
            <person name="Guo J."/>
            <person name="Wu J."/>
            <person name="Ji Q."/>
            <person name="Wang C."/>
            <person name="Luo L."/>
            <person name="Yuan Y."/>
            <person name="Wang Y."/>
            <person name="Wang J."/>
        </authorList>
    </citation>
    <scope>GENE FAMILY</scope>
    <scope>NOMENCLATURE</scope>
</reference>
<accession>Q96320</accession>
<accession>O23186</accession>
<name>HSFB1_ARATH</name>
<feature type="chain" id="PRO_0000124585" description="Heat stress transcription factor B-1">
    <location>
        <begin position="1"/>
        <end position="284"/>
    </location>
</feature>
<feature type="DNA-binding region" evidence="1">
    <location>
        <begin position="12"/>
        <end position="106"/>
    </location>
</feature>
<feature type="region of interest" description="Disordered" evidence="3">
    <location>
        <begin position="118"/>
        <end position="151"/>
    </location>
</feature>
<feature type="region of interest" description="Hydrophobic repeat HR-A/B">
    <location>
        <begin position="147"/>
        <end position="192"/>
    </location>
</feature>
<feature type="short sequence motif" description="Nuclear localization signal" evidence="2">
    <location>
        <begin position="247"/>
        <end position="252"/>
    </location>
</feature>
<feature type="compositionally biased region" description="Low complexity" evidence="3">
    <location>
        <begin position="134"/>
        <end position="148"/>
    </location>
</feature>
<feature type="sequence conflict" description="In Ref. 1; AAC31756." evidence="5" ref="1">
    <original>S</original>
    <variation>R</variation>
    <location>
        <position position="27"/>
    </location>
</feature>
<organism>
    <name type="scientific">Arabidopsis thaliana</name>
    <name type="common">Mouse-ear cress</name>
    <dbReference type="NCBI Taxonomy" id="3702"/>
    <lineage>
        <taxon>Eukaryota</taxon>
        <taxon>Viridiplantae</taxon>
        <taxon>Streptophyta</taxon>
        <taxon>Embryophyta</taxon>
        <taxon>Tracheophyta</taxon>
        <taxon>Spermatophyta</taxon>
        <taxon>Magnoliopsida</taxon>
        <taxon>eudicotyledons</taxon>
        <taxon>Gunneridae</taxon>
        <taxon>Pentapetalae</taxon>
        <taxon>rosids</taxon>
        <taxon>malvids</taxon>
        <taxon>Brassicales</taxon>
        <taxon>Brassicaceae</taxon>
        <taxon>Camelineae</taxon>
        <taxon>Arabidopsis</taxon>
    </lineage>
</organism>
<sequence length="284" mass="31328">MTAVTAAQRSVPAPFLSKTYQLVDDHSTDDVVSWNEEGTAFVVWKTAEFAKDLLPQYFKHNNFSSFIRQLNTYGFRKTVPDKWEFANDYFRRGGEDLLTDIRRRKSVIASTAGKCVVVGSPSESNSGGGDDHGSSSTSSPGSSKNPGSVENMVADLSGENEKLKRENNNLSSELAAAKKQRDELVTFLTGHLKVRPEQIDKMIKGGKFKPVESDEESECEGCDGGGGAEEGVGEGLKLFGVWLKGERKKRDRDEKNYVVSGSRMTEIKNVDFHAPLWKSSKVCN</sequence>
<proteinExistence type="evidence at transcript level"/>
<gene>
    <name type="primary">HSFB1</name>
    <name type="synonym">HSF16</name>
    <name type="synonym">HSF4</name>
    <name type="ordered locus">At4g36990</name>
    <name type="ORF">C7A10.370</name>
</gene>
<protein>
    <recommendedName>
        <fullName>Heat stress transcription factor B-1</fullName>
        <shortName>AtHsfB1</shortName>
    </recommendedName>
    <alternativeName>
        <fullName>AtHsf-16</fullName>
    </alternativeName>
    <alternativeName>
        <fullName>Heat shock factor protein 4</fullName>
        <shortName>HSF 4</shortName>
    </alternativeName>
    <alternativeName>
        <fullName>Heat shock transcription factor 4</fullName>
        <shortName>HSTF 4</shortName>
    </alternativeName>
</protein>
<keyword id="KW-0238">DNA-binding</keyword>
<keyword id="KW-0539">Nucleus</keyword>
<keyword id="KW-0597">Phosphoprotein</keyword>
<keyword id="KW-1185">Reference proteome</keyword>
<keyword id="KW-0346">Stress response</keyword>
<keyword id="KW-0804">Transcription</keyword>
<keyword id="KW-0805">Transcription regulation</keyword>
<dbReference type="EMBL" id="U68017">
    <property type="protein sequence ID" value="AAC31756.1"/>
    <property type="molecule type" value="mRNA"/>
</dbReference>
<dbReference type="EMBL" id="Y14069">
    <property type="protein sequence ID" value="CAA74398.1"/>
    <property type="molecule type" value="mRNA"/>
</dbReference>
<dbReference type="EMBL" id="Z99707">
    <property type="protein sequence ID" value="CAB16764.1"/>
    <property type="molecule type" value="Genomic_DNA"/>
</dbReference>
<dbReference type="EMBL" id="AL161590">
    <property type="protein sequence ID" value="CAB80365.1"/>
    <property type="molecule type" value="Genomic_DNA"/>
</dbReference>
<dbReference type="EMBL" id="CP002687">
    <property type="protein sequence ID" value="AEE86732.1"/>
    <property type="molecule type" value="Genomic_DNA"/>
</dbReference>
<dbReference type="EMBL" id="AY120760">
    <property type="protein sequence ID" value="AAM53318.1"/>
    <property type="molecule type" value="mRNA"/>
</dbReference>
<dbReference type="EMBL" id="BT003369">
    <property type="protein sequence ID" value="AAO30002.1"/>
    <property type="molecule type" value="mRNA"/>
</dbReference>
<dbReference type="PIR" id="H85436">
    <property type="entry name" value="H85436"/>
</dbReference>
<dbReference type="PIR" id="S71851">
    <property type="entry name" value="S71851"/>
</dbReference>
<dbReference type="RefSeq" id="NP_195416.1">
    <property type="nucleotide sequence ID" value="NM_119862.3"/>
</dbReference>
<dbReference type="SMR" id="Q96320"/>
<dbReference type="BioGRID" id="15134">
    <property type="interactions" value="10"/>
</dbReference>
<dbReference type="FunCoup" id="Q96320">
    <property type="interactions" value="11"/>
</dbReference>
<dbReference type="IntAct" id="Q96320">
    <property type="interactions" value="4"/>
</dbReference>
<dbReference type="STRING" id="3702.Q96320"/>
<dbReference type="iPTMnet" id="Q96320"/>
<dbReference type="PaxDb" id="3702-AT4G36990.1"/>
<dbReference type="ProteomicsDB" id="232089"/>
<dbReference type="EnsemblPlants" id="AT4G36990.1">
    <property type="protein sequence ID" value="AT4G36990.1"/>
    <property type="gene ID" value="AT4G36990"/>
</dbReference>
<dbReference type="GeneID" id="829853"/>
<dbReference type="Gramene" id="AT4G36990.1">
    <property type="protein sequence ID" value="AT4G36990.1"/>
    <property type="gene ID" value="AT4G36990"/>
</dbReference>
<dbReference type="KEGG" id="ath:AT4G36990"/>
<dbReference type="Araport" id="AT4G36990"/>
<dbReference type="TAIR" id="AT4G36990">
    <property type="gene designation" value="HSF4"/>
</dbReference>
<dbReference type="eggNOG" id="KOG0627">
    <property type="taxonomic scope" value="Eukaryota"/>
</dbReference>
<dbReference type="HOGENOM" id="CLU_030308_3_1_1"/>
<dbReference type="InParanoid" id="Q96320"/>
<dbReference type="OMA" id="MINRIMS"/>
<dbReference type="OrthoDB" id="60033at2759"/>
<dbReference type="PhylomeDB" id="Q96320"/>
<dbReference type="PRO" id="PR:Q96320"/>
<dbReference type="Proteomes" id="UP000006548">
    <property type="component" value="Chromosome 4"/>
</dbReference>
<dbReference type="ExpressionAtlas" id="Q96320">
    <property type="expression patterns" value="baseline and differential"/>
</dbReference>
<dbReference type="GO" id="GO:0005634">
    <property type="term" value="C:nucleus"/>
    <property type="evidence" value="ECO:0007669"/>
    <property type="project" value="UniProtKB-SubCell"/>
</dbReference>
<dbReference type="GO" id="GO:0003700">
    <property type="term" value="F:DNA-binding transcription factor activity"/>
    <property type="evidence" value="ECO:0000250"/>
    <property type="project" value="TAIR"/>
</dbReference>
<dbReference type="GO" id="GO:0043565">
    <property type="term" value="F:sequence-specific DNA binding"/>
    <property type="evidence" value="ECO:0007669"/>
    <property type="project" value="InterPro"/>
</dbReference>
<dbReference type="GO" id="GO:0045892">
    <property type="term" value="P:negative regulation of DNA-templated transcription"/>
    <property type="evidence" value="ECO:0000314"/>
    <property type="project" value="TAIR"/>
</dbReference>
<dbReference type="GO" id="GO:0009408">
    <property type="term" value="P:response to heat"/>
    <property type="evidence" value="ECO:0000270"/>
    <property type="project" value="TAIR"/>
</dbReference>
<dbReference type="FunFam" id="1.10.10.10:FF:000037">
    <property type="entry name" value="Heat stress transcription factor B-4"/>
    <property type="match status" value="1"/>
</dbReference>
<dbReference type="Gene3D" id="1.10.10.10">
    <property type="entry name" value="Winged helix-like DNA-binding domain superfamily/Winged helix DNA-binding domain"/>
    <property type="match status" value="1"/>
</dbReference>
<dbReference type="InterPro" id="IPR000232">
    <property type="entry name" value="HSF_DNA-bd"/>
</dbReference>
<dbReference type="InterPro" id="IPR036388">
    <property type="entry name" value="WH-like_DNA-bd_sf"/>
</dbReference>
<dbReference type="InterPro" id="IPR036390">
    <property type="entry name" value="WH_DNA-bd_sf"/>
</dbReference>
<dbReference type="PANTHER" id="PTHR10015">
    <property type="entry name" value="HEAT SHOCK TRANSCRIPTION FACTOR"/>
    <property type="match status" value="1"/>
</dbReference>
<dbReference type="PANTHER" id="PTHR10015:SF329">
    <property type="entry name" value="HEAT STRESS TRANSCRIPTION FACTOR B-1"/>
    <property type="match status" value="1"/>
</dbReference>
<dbReference type="Pfam" id="PF00447">
    <property type="entry name" value="HSF_DNA-bind"/>
    <property type="match status" value="1"/>
</dbReference>
<dbReference type="PRINTS" id="PR00056">
    <property type="entry name" value="HSFDOMAIN"/>
</dbReference>
<dbReference type="SMART" id="SM00415">
    <property type="entry name" value="HSF"/>
    <property type="match status" value="1"/>
</dbReference>
<dbReference type="SUPFAM" id="SSF46785">
    <property type="entry name" value="Winged helix' DNA-binding domain"/>
    <property type="match status" value="1"/>
</dbReference>